<proteinExistence type="inferred from homology"/>
<gene>
    <name evidence="1" type="primary">panC</name>
    <name type="ordered locus">EcHS_A0137</name>
</gene>
<feature type="chain" id="PRO_1000097062" description="Pantothenate synthetase">
    <location>
        <begin position="1"/>
        <end position="283"/>
    </location>
</feature>
<feature type="active site" description="Proton donor" evidence="1">
    <location>
        <position position="37"/>
    </location>
</feature>
<feature type="binding site" evidence="1">
    <location>
        <begin position="30"/>
        <end position="37"/>
    </location>
    <ligand>
        <name>ATP</name>
        <dbReference type="ChEBI" id="CHEBI:30616"/>
    </ligand>
</feature>
<feature type="binding site" evidence="1">
    <location>
        <position position="61"/>
    </location>
    <ligand>
        <name>(R)-pantoate</name>
        <dbReference type="ChEBI" id="CHEBI:15980"/>
    </ligand>
</feature>
<feature type="binding site" evidence="1">
    <location>
        <position position="61"/>
    </location>
    <ligand>
        <name>beta-alanine</name>
        <dbReference type="ChEBI" id="CHEBI:57966"/>
    </ligand>
</feature>
<feature type="binding site" evidence="1">
    <location>
        <begin position="149"/>
        <end position="152"/>
    </location>
    <ligand>
        <name>ATP</name>
        <dbReference type="ChEBI" id="CHEBI:30616"/>
    </ligand>
</feature>
<feature type="binding site" evidence="1">
    <location>
        <position position="155"/>
    </location>
    <ligand>
        <name>(R)-pantoate</name>
        <dbReference type="ChEBI" id="CHEBI:15980"/>
    </ligand>
</feature>
<feature type="binding site" evidence="1">
    <location>
        <begin position="186"/>
        <end position="189"/>
    </location>
    <ligand>
        <name>ATP</name>
        <dbReference type="ChEBI" id="CHEBI:30616"/>
    </ligand>
</feature>
<accession>A7ZW82</accession>
<reference key="1">
    <citation type="journal article" date="2008" name="J. Bacteriol.">
        <title>The pangenome structure of Escherichia coli: comparative genomic analysis of E. coli commensal and pathogenic isolates.</title>
        <authorList>
            <person name="Rasko D.A."/>
            <person name="Rosovitz M.J."/>
            <person name="Myers G.S.A."/>
            <person name="Mongodin E.F."/>
            <person name="Fricke W.F."/>
            <person name="Gajer P."/>
            <person name="Crabtree J."/>
            <person name="Sebaihia M."/>
            <person name="Thomson N.R."/>
            <person name="Chaudhuri R."/>
            <person name="Henderson I.R."/>
            <person name="Sperandio V."/>
            <person name="Ravel J."/>
        </authorList>
    </citation>
    <scope>NUCLEOTIDE SEQUENCE [LARGE SCALE GENOMIC DNA]</scope>
    <source>
        <strain>HS</strain>
    </source>
</reference>
<dbReference type="EC" id="6.3.2.1" evidence="1"/>
<dbReference type="EMBL" id="CP000802">
    <property type="protein sequence ID" value="ABV04536.1"/>
    <property type="molecule type" value="Genomic_DNA"/>
</dbReference>
<dbReference type="RefSeq" id="WP_000905383.1">
    <property type="nucleotide sequence ID" value="NC_009800.1"/>
</dbReference>
<dbReference type="BMRB" id="A7ZW82"/>
<dbReference type="SMR" id="A7ZW82"/>
<dbReference type="GeneID" id="75202052"/>
<dbReference type="KEGG" id="ecx:EcHS_A0137"/>
<dbReference type="HOGENOM" id="CLU_047148_0_0_6"/>
<dbReference type="UniPathway" id="UPA00028">
    <property type="reaction ID" value="UER00005"/>
</dbReference>
<dbReference type="GO" id="GO:0005829">
    <property type="term" value="C:cytosol"/>
    <property type="evidence" value="ECO:0007669"/>
    <property type="project" value="TreeGrafter"/>
</dbReference>
<dbReference type="GO" id="GO:0005524">
    <property type="term" value="F:ATP binding"/>
    <property type="evidence" value="ECO:0007669"/>
    <property type="project" value="UniProtKB-KW"/>
</dbReference>
<dbReference type="GO" id="GO:0004592">
    <property type="term" value="F:pantoate-beta-alanine ligase activity"/>
    <property type="evidence" value="ECO:0007669"/>
    <property type="project" value="UniProtKB-UniRule"/>
</dbReference>
<dbReference type="GO" id="GO:0015940">
    <property type="term" value="P:pantothenate biosynthetic process"/>
    <property type="evidence" value="ECO:0007669"/>
    <property type="project" value="UniProtKB-UniRule"/>
</dbReference>
<dbReference type="CDD" id="cd00560">
    <property type="entry name" value="PanC"/>
    <property type="match status" value="1"/>
</dbReference>
<dbReference type="FunFam" id="3.30.1300.10:FF:000001">
    <property type="entry name" value="Pantothenate synthetase"/>
    <property type="match status" value="1"/>
</dbReference>
<dbReference type="FunFam" id="3.40.50.620:FF:000013">
    <property type="entry name" value="Pantothenate synthetase"/>
    <property type="match status" value="1"/>
</dbReference>
<dbReference type="Gene3D" id="3.40.50.620">
    <property type="entry name" value="HUPs"/>
    <property type="match status" value="1"/>
</dbReference>
<dbReference type="Gene3D" id="3.30.1300.10">
    <property type="entry name" value="Pantoate-beta-alanine ligase, C-terminal domain"/>
    <property type="match status" value="1"/>
</dbReference>
<dbReference type="HAMAP" id="MF_00158">
    <property type="entry name" value="PanC"/>
    <property type="match status" value="1"/>
</dbReference>
<dbReference type="InterPro" id="IPR004821">
    <property type="entry name" value="Cyt_trans-like"/>
</dbReference>
<dbReference type="InterPro" id="IPR003721">
    <property type="entry name" value="Pantoate_ligase"/>
</dbReference>
<dbReference type="InterPro" id="IPR042176">
    <property type="entry name" value="Pantoate_ligase_C"/>
</dbReference>
<dbReference type="InterPro" id="IPR014729">
    <property type="entry name" value="Rossmann-like_a/b/a_fold"/>
</dbReference>
<dbReference type="NCBIfam" id="TIGR00125">
    <property type="entry name" value="cyt_tran_rel"/>
    <property type="match status" value="1"/>
</dbReference>
<dbReference type="NCBIfam" id="TIGR00018">
    <property type="entry name" value="panC"/>
    <property type="match status" value="1"/>
</dbReference>
<dbReference type="PANTHER" id="PTHR21299">
    <property type="entry name" value="CYTIDYLATE KINASE/PANTOATE-BETA-ALANINE LIGASE"/>
    <property type="match status" value="1"/>
</dbReference>
<dbReference type="PANTHER" id="PTHR21299:SF1">
    <property type="entry name" value="PANTOATE--BETA-ALANINE LIGASE"/>
    <property type="match status" value="1"/>
</dbReference>
<dbReference type="Pfam" id="PF02569">
    <property type="entry name" value="Pantoate_ligase"/>
    <property type="match status" value="1"/>
</dbReference>
<dbReference type="SUPFAM" id="SSF52374">
    <property type="entry name" value="Nucleotidylyl transferase"/>
    <property type="match status" value="1"/>
</dbReference>
<name>PANC_ECOHS</name>
<comment type="function">
    <text evidence="1">Catalyzes the condensation of pantoate with beta-alanine in an ATP-dependent reaction via a pantoyl-adenylate intermediate.</text>
</comment>
<comment type="catalytic activity">
    <reaction evidence="1">
        <text>(R)-pantoate + beta-alanine + ATP = (R)-pantothenate + AMP + diphosphate + H(+)</text>
        <dbReference type="Rhea" id="RHEA:10912"/>
        <dbReference type="ChEBI" id="CHEBI:15378"/>
        <dbReference type="ChEBI" id="CHEBI:15980"/>
        <dbReference type="ChEBI" id="CHEBI:29032"/>
        <dbReference type="ChEBI" id="CHEBI:30616"/>
        <dbReference type="ChEBI" id="CHEBI:33019"/>
        <dbReference type="ChEBI" id="CHEBI:57966"/>
        <dbReference type="ChEBI" id="CHEBI:456215"/>
        <dbReference type="EC" id="6.3.2.1"/>
    </reaction>
</comment>
<comment type="pathway">
    <text evidence="1">Cofactor biosynthesis; (R)-pantothenate biosynthesis; (R)-pantothenate from (R)-pantoate and beta-alanine: step 1/1.</text>
</comment>
<comment type="subunit">
    <text evidence="1">Homodimer.</text>
</comment>
<comment type="subcellular location">
    <subcellularLocation>
        <location evidence="1">Cytoplasm</location>
    </subcellularLocation>
</comment>
<comment type="miscellaneous">
    <text evidence="1">The reaction proceeds by a bi uni uni bi ping pong mechanism.</text>
</comment>
<comment type="similarity">
    <text evidence="1">Belongs to the pantothenate synthetase family.</text>
</comment>
<organism>
    <name type="scientific">Escherichia coli O9:H4 (strain HS)</name>
    <dbReference type="NCBI Taxonomy" id="331112"/>
    <lineage>
        <taxon>Bacteria</taxon>
        <taxon>Pseudomonadati</taxon>
        <taxon>Pseudomonadota</taxon>
        <taxon>Gammaproteobacteria</taxon>
        <taxon>Enterobacterales</taxon>
        <taxon>Enterobacteriaceae</taxon>
        <taxon>Escherichia</taxon>
    </lineage>
</organism>
<evidence type="ECO:0000255" key="1">
    <source>
        <dbReference type="HAMAP-Rule" id="MF_00158"/>
    </source>
</evidence>
<keyword id="KW-0067">ATP-binding</keyword>
<keyword id="KW-0963">Cytoplasm</keyword>
<keyword id="KW-0436">Ligase</keyword>
<keyword id="KW-0547">Nucleotide-binding</keyword>
<keyword id="KW-0566">Pantothenate biosynthesis</keyword>
<protein>
    <recommendedName>
        <fullName evidence="1">Pantothenate synthetase</fullName>
        <shortName evidence="1">PS</shortName>
        <ecNumber evidence="1">6.3.2.1</ecNumber>
    </recommendedName>
    <alternativeName>
        <fullName evidence="1">Pantoate--beta-alanine ligase</fullName>
    </alternativeName>
    <alternativeName>
        <fullName evidence="1">Pantoate-activating enzyme</fullName>
    </alternativeName>
</protein>
<sequence length="283" mass="31598">MLIIETLPLLRQQIRRLRMEGKRVALVPTMGNLHDGHMKLVDEAKARADVVVVSIFVNPMQFDRPEDLARYPRTLQEDCEKLNKRKVDLVFAPSVKEIYPNGTETHTYVDVPGLSTMLEGASRPGHFRGVSTIVSKLFNLVQPDIACFGEKDFQQLALIRKMVADMGFDIEIVGVPIMRAKDGLALSSRNGYLTAEQRKIAPGLYKVLSSIADKLQAGERDLDEIITIAGQELNEKGFRADDIQIRDADTLLEVSETSKRAVILVAAWLGDARLIDNKMVELA</sequence>